<name>DIAA_SALCH</name>
<comment type="function">
    <text evidence="1">Required for the timely initiation of chromosomal replication via direct interactions with the DnaA initiator protein.</text>
</comment>
<comment type="subunit">
    <text evidence="1">Homotetramer; dimer of dimers.</text>
</comment>
<comment type="similarity">
    <text evidence="1">Belongs to the SIS family. DiaA subfamily.</text>
</comment>
<accession>Q57JJ9</accession>
<proteinExistence type="inferred from homology"/>
<protein>
    <recommendedName>
        <fullName evidence="1">DnaA initiator-associating protein DiaA</fullName>
    </recommendedName>
</protein>
<sequence>MLERIKVCFTESIQTQIAAAEALPDAISRAAMTLVHSLLNGNKILCCGNGTSAANAQHFAASMINRFETERPSLPAIALNTDNVVLTAIANDRLHDEVYAKQVRALGHAGDVLLAISTRGNSRDIVKAVEAAVTRDMTIVALTGYDGGELAGLLGPQDVEIRIPSHHSARIQEMHMLTVNCLCDLIDNTLFPHQDD</sequence>
<reference key="1">
    <citation type="journal article" date="2005" name="Nucleic Acids Res.">
        <title>The genome sequence of Salmonella enterica serovar Choleraesuis, a highly invasive and resistant zoonotic pathogen.</title>
        <authorList>
            <person name="Chiu C.-H."/>
            <person name="Tang P."/>
            <person name="Chu C."/>
            <person name="Hu S."/>
            <person name="Bao Q."/>
            <person name="Yu J."/>
            <person name="Chou Y.-Y."/>
            <person name="Wang H.-S."/>
            <person name="Lee Y.-S."/>
        </authorList>
    </citation>
    <scope>NUCLEOTIDE SEQUENCE [LARGE SCALE GENOMIC DNA]</scope>
    <source>
        <strain>SC-B67</strain>
    </source>
</reference>
<feature type="chain" id="PRO_1000065546" description="DnaA initiator-associating protein DiaA">
    <location>
        <begin position="1"/>
        <end position="196"/>
    </location>
</feature>
<feature type="domain" description="SIS" evidence="1">
    <location>
        <begin position="34"/>
        <end position="196"/>
    </location>
</feature>
<organism>
    <name type="scientific">Salmonella choleraesuis (strain SC-B67)</name>
    <dbReference type="NCBI Taxonomy" id="321314"/>
    <lineage>
        <taxon>Bacteria</taxon>
        <taxon>Pseudomonadati</taxon>
        <taxon>Pseudomonadota</taxon>
        <taxon>Gammaproteobacteria</taxon>
        <taxon>Enterobacterales</taxon>
        <taxon>Enterobacteriaceae</taxon>
        <taxon>Salmonella</taxon>
    </lineage>
</organism>
<dbReference type="EMBL" id="AE017220">
    <property type="protein sequence ID" value="AAX67113.1"/>
    <property type="molecule type" value="Genomic_DNA"/>
</dbReference>
<dbReference type="RefSeq" id="WP_000893481.1">
    <property type="nucleotide sequence ID" value="NC_006905.1"/>
</dbReference>
<dbReference type="SMR" id="Q57JJ9"/>
<dbReference type="GeneID" id="66757607"/>
<dbReference type="KEGG" id="sec:SCH_3207"/>
<dbReference type="HOGENOM" id="CLU_080999_3_1_6"/>
<dbReference type="Proteomes" id="UP000000538">
    <property type="component" value="Chromosome"/>
</dbReference>
<dbReference type="GO" id="GO:0097367">
    <property type="term" value="F:carbohydrate derivative binding"/>
    <property type="evidence" value="ECO:0007669"/>
    <property type="project" value="InterPro"/>
</dbReference>
<dbReference type="GO" id="GO:1901135">
    <property type="term" value="P:carbohydrate derivative metabolic process"/>
    <property type="evidence" value="ECO:0007669"/>
    <property type="project" value="InterPro"/>
</dbReference>
<dbReference type="GO" id="GO:0006260">
    <property type="term" value="P:DNA replication"/>
    <property type="evidence" value="ECO:0007669"/>
    <property type="project" value="UniProtKB-UniRule"/>
</dbReference>
<dbReference type="CDD" id="cd05006">
    <property type="entry name" value="SIS_GmhA"/>
    <property type="match status" value="1"/>
</dbReference>
<dbReference type="FunFam" id="3.40.50.10490:FF:000006">
    <property type="entry name" value="DnaA initiator-associating protein DiaA"/>
    <property type="match status" value="1"/>
</dbReference>
<dbReference type="Gene3D" id="3.40.50.10490">
    <property type="entry name" value="Glucose-6-phosphate isomerase like protein, domain 1"/>
    <property type="match status" value="1"/>
</dbReference>
<dbReference type="HAMAP" id="MF_01157">
    <property type="entry name" value="SIS_DiaA"/>
    <property type="match status" value="1"/>
</dbReference>
<dbReference type="InterPro" id="IPR023070">
    <property type="entry name" value="DiaA"/>
</dbReference>
<dbReference type="InterPro" id="IPR035461">
    <property type="entry name" value="GmhA/DiaA"/>
</dbReference>
<dbReference type="InterPro" id="IPR001347">
    <property type="entry name" value="SIS_dom"/>
</dbReference>
<dbReference type="InterPro" id="IPR046348">
    <property type="entry name" value="SIS_dom_sf"/>
</dbReference>
<dbReference type="InterPro" id="IPR050099">
    <property type="entry name" value="SIS_GmhA/DiaA_subfam"/>
</dbReference>
<dbReference type="NCBIfam" id="NF008138">
    <property type="entry name" value="PRK10886.1"/>
    <property type="match status" value="1"/>
</dbReference>
<dbReference type="PANTHER" id="PTHR30390:SF6">
    <property type="entry name" value="DNAA INITIATOR-ASSOCIATING PROTEIN DIAA"/>
    <property type="match status" value="1"/>
</dbReference>
<dbReference type="PANTHER" id="PTHR30390">
    <property type="entry name" value="SEDOHEPTULOSE 7-PHOSPHATE ISOMERASE / DNAA INITIATOR-ASSOCIATING FACTOR FOR REPLICATION INITIATION"/>
    <property type="match status" value="1"/>
</dbReference>
<dbReference type="Pfam" id="PF13580">
    <property type="entry name" value="SIS_2"/>
    <property type="match status" value="1"/>
</dbReference>
<dbReference type="SUPFAM" id="SSF53697">
    <property type="entry name" value="SIS domain"/>
    <property type="match status" value="1"/>
</dbReference>
<dbReference type="PROSITE" id="PS51464">
    <property type="entry name" value="SIS"/>
    <property type="match status" value="1"/>
</dbReference>
<keyword id="KW-0235">DNA replication</keyword>
<evidence type="ECO:0000255" key="1">
    <source>
        <dbReference type="HAMAP-Rule" id="MF_01157"/>
    </source>
</evidence>
<gene>
    <name evidence="1" type="primary">diaA</name>
    <name type="ordered locus">SCH_3207</name>
</gene>